<accession>A7Z0N2</accession>
<dbReference type="EMBL" id="CP000560">
    <property type="protein sequence ID" value="ABS72558.1"/>
    <property type="molecule type" value="Genomic_DNA"/>
</dbReference>
<dbReference type="RefSeq" id="WP_003156445.1">
    <property type="nucleotide sequence ID" value="NC_009725.2"/>
</dbReference>
<dbReference type="SMR" id="A7Z0N2"/>
<dbReference type="GeneID" id="93079274"/>
<dbReference type="KEGG" id="bay:RBAM_001350"/>
<dbReference type="HOGENOM" id="CLU_104295_1_2_9"/>
<dbReference type="Proteomes" id="UP000001120">
    <property type="component" value="Chromosome"/>
</dbReference>
<dbReference type="GO" id="GO:0015935">
    <property type="term" value="C:small ribosomal subunit"/>
    <property type="evidence" value="ECO:0007669"/>
    <property type="project" value="InterPro"/>
</dbReference>
<dbReference type="GO" id="GO:0019843">
    <property type="term" value="F:rRNA binding"/>
    <property type="evidence" value="ECO:0007669"/>
    <property type="project" value="UniProtKB-UniRule"/>
</dbReference>
<dbReference type="GO" id="GO:0003735">
    <property type="term" value="F:structural constituent of ribosome"/>
    <property type="evidence" value="ECO:0007669"/>
    <property type="project" value="InterPro"/>
</dbReference>
<dbReference type="GO" id="GO:0000049">
    <property type="term" value="F:tRNA binding"/>
    <property type="evidence" value="ECO:0007669"/>
    <property type="project" value="UniProtKB-UniRule"/>
</dbReference>
<dbReference type="GO" id="GO:0006412">
    <property type="term" value="P:translation"/>
    <property type="evidence" value="ECO:0007669"/>
    <property type="project" value="UniProtKB-UniRule"/>
</dbReference>
<dbReference type="CDD" id="cd03368">
    <property type="entry name" value="Ribosomal_S12"/>
    <property type="match status" value="1"/>
</dbReference>
<dbReference type="FunFam" id="2.40.50.140:FF:000001">
    <property type="entry name" value="30S ribosomal protein S12"/>
    <property type="match status" value="1"/>
</dbReference>
<dbReference type="Gene3D" id="2.40.50.140">
    <property type="entry name" value="Nucleic acid-binding proteins"/>
    <property type="match status" value="1"/>
</dbReference>
<dbReference type="HAMAP" id="MF_00403_B">
    <property type="entry name" value="Ribosomal_uS12_B"/>
    <property type="match status" value="1"/>
</dbReference>
<dbReference type="InterPro" id="IPR012340">
    <property type="entry name" value="NA-bd_OB-fold"/>
</dbReference>
<dbReference type="InterPro" id="IPR006032">
    <property type="entry name" value="Ribosomal_uS12"/>
</dbReference>
<dbReference type="InterPro" id="IPR005679">
    <property type="entry name" value="Ribosomal_uS12_bac"/>
</dbReference>
<dbReference type="NCBIfam" id="TIGR00981">
    <property type="entry name" value="rpsL_bact"/>
    <property type="match status" value="1"/>
</dbReference>
<dbReference type="PANTHER" id="PTHR11652">
    <property type="entry name" value="30S RIBOSOMAL PROTEIN S12 FAMILY MEMBER"/>
    <property type="match status" value="1"/>
</dbReference>
<dbReference type="Pfam" id="PF00164">
    <property type="entry name" value="Ribosom_S12_S23"/>
    <property type="match status" value="1"/>
</dbReference>
<dbReference type="PRINTS" id="PR01034">
    <property type="entry name" value="RIBOSOMALS12"/>
</dbReference>
<dbReference type="SUPFAM" id="SSF50249">
    <property type="entry name" value="Nucleic acid-binding proteins"/>
    <property type="match status" value="1"/>
</dbReference>
<dbReference type="PROSITE" id="PS00055">
    <property type="entry name" value="RIBOSOMAL_S12"/>
    <property type="match status" value="1"/>
</dbReference>
<proteinExistence type="inferred from homology"/>
<comment type="function">
    <text evidence="2">With S4 and S5 plays an important role in translational accuracy.</text>
</comment>
<comment type="function">
    <text evidence="2">Interacts with and stabilizes bases of the 16S rRNA that are involved in tRNA selection in the A site and with the mRNA backbone. Located at the interface of the 30S and 50S subunits, it traverses the body of the 30S subunit contacting proteins on the other side and probably holding the rRNA structure together. The combined cluster of proteins S8, S12 and S17 appears to hold together the shoulder and platform of the 30S subunit.</text>
</comment>
<comment type="subunit">
    <text evidence="2">Part of the 30S ribosomal subunit. Contacts proteins S8 and S17. May interact with IF1 in the 30S initiation complex.</text>
</comment>
<comment type="similarity">
    <text evidence="2">Belongs to the universal ribosomal protein uS12 family.</text>
</comment>
<sequence>MPTINQLIRKGRVSKVENSKSPALNKGYNSFKKEHTNVSSPQKRGVCTRVGTMTPKKPNSALRKYARVRLTNGIEVTAYIPGIGHNLQEHSVVLIRGGRVKDLPGVRYHIVRGALDTAGVENRAQGRSKYGTKRPKAK</sequence>
<protein>
    <recommendedName>
        <fullName evidence="2">Small ribosomal subunit protein uS12</fullName>
    </recommendedName>
    <alternativeName>
        <fullName evidence="4">30S ribosomal protein S12</fullName>
    </alternativeName>
</protein>
<reference key="1">
    <citation type="journal article" date="2007" name="Nat. Biotechnol.">
        <title>Comparative analysis of the complete genome sequence of the plant growth-promoting bacterium Bacillus amyloliquefaciens FZB42.</title>
        <authorList>
            <person name="Chen X.H."/>
            <person name="Koumoutsi A."/>
            <person name="Scholz R."/>
            <person name="Eisenreich A."/>
            <person name="Schneider K."/>
            <person name="Heinemeyer I."/>
            <person name="Morgenstern B."/>
            <person name="Voss B."/>
            <person name="Hess W.R."/>
            <person name="Reva O."/>
            <person name="Junge H."/>
            <person name="Voigt B."/>
            <person name="Jungblut P.R."/>
            <person name="Vater J."/>
            <person name="Suessmuth R."/>
            <person name="Liesegang H."/>
            <person name="Strittmatter A."/>
            <person name="Gottschalk G."/>
            <person name="Borriss R."/>
        </authorList>
    </citation>
    <scope>NUCLEOTIDE SEQUENCE [LARGE SCALE GENOMIC DNA]</scope>
    <source>
        <strain>DSM 23117 / BGSC 10A6 / LMG 26770 / FZB42</strain>
    </source>
</reference>
<gene>
    <name evidence="2" type="primary">rpsL</name>
    <name type="ordered locus">RBAM_001350</name>
</gene>
<evidence type="ECO:0000250" key="1"/>
<evidence type="ECO:0000255" key="2">
    <source>
        <dbReference type="HAMAP-Rule" id="MF_00403"/>
    </source>
</evidence>
<evidence type="ECO:0000256" key="3">
    <source>
        <dbReference type="SAM" id="MobiDB-lite"/>
    </source>
</evidence>
<evidence type="ECO:0000305" key="4"/>
<keyword id="KW-0488">Methylation</keyword>
<keyword id="KW-0687">Ribonucleoprotein</keyword>
<keyword id="KW-0689">Ribosomal protein</keyword>
<keyword id="KW-0694">RNA-binding</keyword>
<keyword id="KW-0699">rRNA-binding</keyword>
<keyword id="KW-0820">tRNA-binding</keyword>
<name>RS12_BACVZ</name>
<feature type="chain" id="PRO_1000049769" description="Small ribosomal subunit protein uS12">
    <location>
        <begin position="1"/>
        <end position="138"/>
    </location>
</feature>
<feature type="region of interest" description="Disordered" evidence="3">
    <location>
        <begin position="33"/>
        <end position="55"/>
    </location>
</feature>
<feature type="modified residue" description="3-methylthioaspartic acid" evidence="1">
    <location>
        <position position="102"/>
    </location>
</feature>
<organism>
    <name type="scientific">Bacillus velezensis (strain DSM 23117 / BGSC 10A6 / LMG 26770 / FZB42)</name>
    <name type="common">Bacillus amyloliquefaciens subsp. plantarum</name>
    <dbReference type="NCBI Taxonomy" id="326423"/>
    <lineage>
        <taxon>Bacteria</taxon>
        <taxon>Bacillati</taxon>
        <taxon>Bacillota</taxon>
        <taxon>Bacilli</taxon>
        <taxon>Bacillales</taxon>
        <taxon>Bacillaceae</taxon>
        <taxon>Bacillus</taxon>
        <taxon>Bacillus amyloliquefaciens group</taxon>
    </lineage>
</organism>